<sequence>MGERITLSVIKADIGGFVGHSSVHPRLLETAERYLAESKLLIDYRVAHVGDDIDLIMTHKYGVDCPEIHHLAWNVFLQCTEVARELKLYGAGQDLLSDAFSGNVKGMGPGVAEMEFEERKSEPIIVFAADKTEPGAWNLPLYKMFADPFNTIGLVIDPKMHQGFRFEVYDLIKNERVEFSLPEELYDLLVFIGAPGRYCIKSVYSKTTGEIAAVSSTQRLNLMAGRYVGKDDPVCIVRCQSGLPAVGEALEPFANPHLVAGWMRGSHIGPLMPVGLDQSAPTRFDGPPRVVAMGFQLSGGRLVGPQDFFGDVAFDKARQTANEIASYLRSLGPFEPHRLPLEDMEYTTMPEVMAKLKNRFVKVDHRDDREPAAEELGAK</sequence>
<proteinExistence type="evidence at protein level"/>
<reference key="1">
    <citation type="journal article" date="2008" name="Environ. Microbiol.">
        <title>The complete genome sequence of Moorella thermoacetica (f. Clostridium thermoaceticum).</title>
        <authorList>
            <person name="Pierce E."/>
            <person name="Xie G."/>
            <person name="Barabote R.D."/>
            <person name="Saunders E."/>
            <person name="Han C.S."/>
            <person name="Detter J.C."/>
            <person name="Richardson P."/>
            <person name="Brettin T.S."/>
            <person name="Das A."/>
            <person name="Ljungdahl L.G."/>
            <person name="Ragsdale S.W."/>
        </authorList>
    </citation>
    <scope>NUCLEOTIDE SEQUENCE [LARGE SCALE GENOMIC DNA]</scope>
    <source>
        <strain>ATCC 39073 / JCM 9320</strain>
    </source>
</reference>
<reference key="2">
    <citation type="journal article" date="2010" name="Nature">
        <title>Fructose 1,6-bisphosphate aldolase/phosphatase may be an ancestral gluconeogenic enzyme.</title>
        <authorList>
            <person name="Say R.F."/>
            <person name="Fuchs G."/>
        </authorList>
    </citation>
    <scope>FUNCTION AS BOTH FBPASE AND FBP ALDOLASE</scope>
    <scope>CATALYTIC ACTIVITY</scope>
    <scope>PATHWAY</scope>
    <source>
        <strain>ATCC 39073 / JCM 9320</strain>
    </source>
</reference>
<feature type="chain" id="PRO_0000437177" description="Fructose-1,6-bisphosphate aldolase/phosphatase">
    <location>
        <begin position="1"/>
        <end position="379"/>
    </location>
</feature>
<feature type="active site" description="Proton acceptor; for FBP phosphatase activity" evidence="1">
    <location>
        <position position="13"/>
    </location>
</feature>
<feature type="active site" description="Proton donor/acceptor; for FBP aldolase activity" evidence="1">
    <location>
        <position position="227"/>
    </location>
</feature>
<feature type="active site" description="Schiff-base intermediate with DHAP; for FBP aldolase activity" evidence="1">
    <location>
        <position position="230"/>
    </location>
</feature>
<feature type="binding site" evidence="1">
    <location>
        <position position="13"/>
    </location>
    <ligand>
        <name>Mg(2+)</name>
        <dbReference type="ChEBI" id="CHEBI:18420"/>
        <label>1</label>
    </ligand>
</feature>
<feature type="binding site" description="in other chain" evidence="1">
    <location>
        <position position="20"/>
    </location>
    <ligand>
        <name>beta-D-fructose 1,6-bisphosphate</name>
        <dbReference type="ChEBI" id="CHEBI:32966"/>
        <note>ligand shared between dimeric partners</note>
    </ligand>
</feature>
<feature type="binding site" evidence="1">
    <location>
        <position position="20"/>
    </location>
    <ligand>
        <name>dihydroxyacetone phosphate</name>
        <dbReference type="ChEBI" id="CHEBI:57642"/>
    </ligand>
</feature>
<feature type="binding site" evidence="1">
    <location>
        <position position="20"/>
    </location>
    <ligand>
        <name>Mg(2+)</name>
        <dbReference type="ChEBI" id="CHEBI:18420"/>
        <label>1</label>
    </ligand>
</feature>
<feature type="binding site" evidence="1">
    <location>
        <position position="51"/>
    </location>
    <ligand>
        <name>Mg(2+)</name>
        <dbReference type="ChEBI" id="CHEBI:18420"/>
        <label>1</label>
    </ligand>
</feature>
<feature type="binding site" evidence="1">
    <location>
        <position position="51"/>
    </location>
    <ligand>
        <name>Mg(2+)</name>
        <dbReference type="ChEBI" id="CHEBI:18420"/>
        <label>2</label>
    </ligand>
</feature>
<feature type="binding site" evidence="1">
    <location>
        <position position="52"/>
    </location>
    <ligand>
        <name>Mg(2+)</name>
        <dbReference type="ChEBI" id="CHEBI:18420"/>
        <label>2</label>
    </ligand>
</feature>
<feature type="binding site" description="in other chain" evidence="1">
    <location>
        <position position="89"/>
    </location>
    <ligand>
        <name>beta-D-fructose 1,6-bisphosphate</name>
        <dbReference type="ChEBI" id="CHEBI:32966"/>
        <note>ligand shared between dimeric partners</note>
    </ligand>
</feature>
<feature type="binding site" evidence="1">
    <location>
        <position position="93"/>
    </location>
    <ligand>
        <name>Mg(2+)</name>
        <dbReference type="ChEBI" id="CHEBI:18420"/>
        <label>1</label>
    </ligand>
</feature>
<feature type="binding site" description="in other chain" evidence="1">
    <location>
        <begin position="102"/>
        <end position="103"/>
    </location>
    <ligand>
        <name>beta-D-fructose 1,6-bisphosphate</name>
        <dbReference type="ChEBI" id="CHEBI:32966"/>
        <note>ligand shared between dimeric partners</note>
    </ligand>
</feature>
<feature type="binding site" evidence="1">
    <location>
        <position position="130"/>
    </location>
    <ligand>
        <name>Mg(2+)</name>
        <dbReference type="ChEBI" id="CHEBI:18420"/>
        <label>2</label>
    </ligand>
</feature>
<feature type="binding site" description="in other chain" evidence="1">
    <location>
        <position position="131"/>
    </location>
    <ligand>
        <name>beta-D-fructose 1,6-bisphosphate</name>
        <dbReference type="ChEBI" id="CHEBI:32966"/>
        <note>ligand shared between dimeric partners</note>
    </ligand>
</feature>
<feature type="binding site" evidence="1">
    <location>
        <position position="131"/>
    </location>
    <ligand>
        <name>dihydroxyacetone phosphate</name>
        <dbReference type="ChEBI" id="CHEBI:57642"/>
    </ligand>
</feature>
<feature type="binding site" evidence="1">
    <location>
        <position position="230"/>
    </location>
    <ligand>
        <name>Mg(2+)</name>
        <dbReference type="ChEBI" id="CHEBI:18420"/>
        <label>3</label>
    </ligand>
</feature>
<feature type="binding site" evidence="1">
    <location>
        <position position="231"/>
    </location>
    <ligand>
        <name>Mg(2+)</name>
        <dbReference type="ChEBI" id="CHEBI:18420"/>
        <label>3</label>
    </ligand>
</feature>
<feature type="binding site" evidence="1">
    <location>
        <position position="231"/>
    </location>
    <ligand>
        <name>Mg(2+)</name>
        <dbReference type="ChEBI" id="CHEBI:18420"/>
        <label>4</label>
    </ligand>
</feature>
<feature type="binding site" evidence="1">
    <location>
        <position position="232"/>
    </location>
    <ligand>
        <name>Mg(2+)</name>
        <dbReference type="ChEBI" id="CHEBI:18420"/>
        <label>2</label>
    </ligand>
</feature>
<feature type="binding site" evidence="1">
    <location>
        <position position="232"/>
    </location>
    <ligand>
        <name>Mg(2+)</name>
        <dbReference type="ChEBI" id="CHEBI:18420"/>
        <label>3</label>
    </ligand>
</feature>
<feature type="binding site" evidence="1">
    <location>
        <begin position="240"/>
        <end position="241"/>
    </location>
    <ligand>
        <name>beta-D-fructose 1,6-bisphosphate</name>
        <dbReference type="ChEBI" id="CHEBI:32966"/>
        <note>ligand shared between dimeric partners</note>
    </ligand>
</feature>
<feature type="binding site" description="in other chain" evidence="1">
    <location>
        <position position="264"/>
    </location>
    <ligand>
        <name>beta-D-fructose 1,6-bisphosphate</name>
        <dbReference type="ChEBI" id="CHEBI:32966"/>
        <note>ligand shared between dimeric partners</note>
    </ligand>
</feature>
<feature type="binding site" evidence="1">
    <location>
        <position position="264"/>
    </location>
    <ligand>
        <name>dihydroxyacetone phosphate</name>
        <dbReference type="ChEBI" id="CHEBI:57642"/>
    </ligand>
</feature>
<feature type="binding site" description="in other chain" evidence="1">
    <location>
        <position position="285"/>
    </location>
    <ligand>
        <name>beta-D-fructose 1,6-bisphosphate</name>
        <dbReference type="ChEBI" id="CHEBI:32966"/>
        <note>ligand shared between dimeric partners</note>
    </ligand>
</feature>
<feature type="binding site" evidence="1">
    <location>
        <position position="285"/>
    </location>
    <ligand>
        <name>dihydroxyacetone phosphate</name>
        <dbReference type="ChEBI" id="CHEBI:57642"/>
    </ligand>
</feature>
<feature type="binding site" description="in other chain" evidence="1">
    <location>
        <position position="346"/>
    </location>
    <ligand>
        <name>beta-D-fructose 1,6-bisphosphate</name>
        <dbReference type="ChEBI" id="CHEBI:32966"/>
        <note>ligand shared between dimeric partners</note>
    </ligand>
</feature>
<protein>
    <recommendedName>
        <fullName evidence="4">Fructose-1,6-bisphosphate aldolase/phosphatase</fullName>
        <shortName evidence="2">FBP A/P</shortName>
        <shortName evidence="4">FBP aldolase/phosphatase</shortName>
        <ecNumber evidence="3">3.1.3.11</ecNumber>
        <ecNumber evidence="3">4.1.2.13</ecNumber>
    </recommendedName>
</protein>
<gene>
    <name evidence="2" type="primary">fbp</name>
    <name evidence="7" type="ordered locus">Moth_2266</name>
</gene>
<evidence type="ECO:0000250" key="1">
    <source>
        <dbReference type="UniProtKB" id="F9VMT6"/>
    </source>
</evidence>
<evidence type="ECO:0000255" key="2">
    <source>
        <dbReference type="HAMAP-Rule" id="MF_02067"/>
    </source>
</evidence>
<evidence type="ECO:0000269" key="3">
    <source>
    </source>
</evidence>
<evidence type="ECO:0000303" key="4">
    <source>
    </source>
</evidence>
<evidence type="ECO:0000305" key="5"/>
<evidence type="ECO:0000305" key="6">
    <source>
    </source>
</evidence>
<evidence type="ECO:0000312" key="7">
    <source>
        <dbReference type="EMBL" id="ABC20553.1"/>
    </source>
</evidence>
<dbReference type="EC" id="3.1.3.11" evidence="3"/>
<dbReference type="EC" id="4.1.2.13" evidence="3"/>
<dbReference type="EMBL" id="CP000232">
    <property type="protein sequence ID" value="ABC20553.1"/>
    <property type="molecule type" value="Genomic_DNA"/>
</dbReference>
<dbReference type="RefSeq" id="YP_431096.1">
    <property type="nucleotide sequence ID" value="NC_007644.1"/>
</dbReference>
<dbReference type="SMR" id="Q2RG86"/>
<dbReference type="STRING" id="264732.Moth_2266"/>
<dbReference type="EnsemblBacteria" id="ABC20553">
    <property type="protein sequence ID" value="ABC20553"/>
    <property type="gene ID" value="Moth_2266"/>
</dbReference>
<dbReference type="KEGG" id="mta:Moth_2266"/>
<dbReference type="PATRIC" id="fig|264732.11.peg.2469"/>
<dbReference type="eggNOG" id="COG1980">
    <property type="taxonomic scope" value="Bacteria"/>
</dbReference>
<dbReference type="HOGENOM" id="CLU_041630_0_0_9"/>
<dbReference type="OrthoDB" id="9763541at2"/>
<dbReference type="UniPathway" id="UPA00138"/>
<dbReference type="GO" id="GO:0042132">
    <property type="term" value="F:fructose 1,6-bisphosphate 1-phosphatase activity"/>
    <property type="evidence" value="ECO:0007669"/>
    <property type="project" value="UniProtKB-UniRule"/>
</dbReference>
<dbReference type="GO" id="GO:0004332">
    <property type="term" value="F:fructose-bisphosphate aldolase activity"/>
    <property type="evidence" value="ECO:0007669"/>
    <property type="project" value="UniProtKB-UniRule"/>
</dbReference>
<dbReference type="GO" id="GO:0000287">
    <property type="term" value="F:magnesium ion binding"/>
    <property type="evidence" value="ECO:0007669"/>
    <property type="project" value="UniProtKB-UniRule"/>
</dbReference>
<dbReference type="GO" id="GO:0006094">
    <property type="term" value="P:gluconeogenesis"/>
    <property type="evidence" value="ECO:0007669"/>
    <property type="project" value="UniProtKB-UniRule"/>
</dbReference>
<dbReference type="HAMAP" id="MF_02067">
    <property type="entry name" value="FBP_aldolase_phosphatase"/>
    <property type="match status" value="1"/>
</dbReference>
<dbReference type="InterPro" id="IPR002803">
    <property type="entry name" value="FBPase_V"/>
</dbReference>
<dbReference type="InterPro" id="IPR036076">
    <property type="entry name" value="FBPase_V_sf"/>
</dbReference>
<dbReference type="NCBIfam" id="NF041126">
    <property type="entry name" value="FBP_aldo_phos"/>
    <property type="match status" value="1"/>
</dbReference>
<dbReference type="PANTHER" id="PTHR38341">
    <property type="entry name" value="FRUCTOSE-1,6-BISPHOSPHATE ALDOLASE/PHOSPHATASE"/>
    <property type="match status" value="1"/>
</dbReference>
<dbReference type="PANTHER" id="PTHR38341:SF1">
    <property type="entry name" value="FRUCTOSE-1,6-BISPHOSPHATE ALDOLASE_PHOSPHATASE"/>
    <property type="match status" value="1"/>
</dbReference>
<dbReference type="Pfam" id="PF01950">
    <property type="entry name" value="FBPase_3"/>
    <property type="match status" value="1"/>
</dbReference>
<dbReference type="PIRSF" id="PIRSF015647">
    <property type="entry name" value="FBPtase_archl"/>
    <property type="match status" value="1"/>
</dbReference>
<dbReference type="SUPFAM" id="SSF111249">
    <property type="entry name" value="Sulfolobus fructose-1,6-bisphosphatase-like"/>
    <property type="match status" value="1"/>
</dbReference>
<name>FBPAP_MOOTA</name>
<keyword id="KW-0119">Carbohydrate metabolism</keyword>
<keyword id="KW-0312">Gluconeogenesis</keyword>
<keyword id="KW-0378">Hydrolase</keyword>
<keyword id="KW-0456">Lyase</keyword>
<keyword id="KW-0460">Magnesium</keyword>
<keyword id="KW-0479">Metal-binding</keyword>
<keyword id="KW-0704">Schiff base</keyword>
<accession>Q2RG86</accession>
<comment type="function">
    <text evidence="3">Catalyzes two subsequent steps in gluconeogenesis: the aldol condensation of dihydroxyacetone phosphate (DHAP) and glyceraldehyde-3-phosphate (GA3P) to fructose-1,6-bisphosphate (FBP), and the dephosphorylation of FBP to fructose-6-phosphate (F6P).</text>
</comment>
<comment type="catalytic activity">
    <reaction evidence="3">
        <text>beta-D-fructose 1,6-bisphosphate + H2O = beta-D-fructose 6-phosphate + phosphate</text>
        <dbReference type="Rhea" id="RHEA:11064"/>
        <dbReference type="ChEBI" id="CHEBI:15377"/>
        <dbReference type="ChEBI" id="CHEBI:32966"/>
        <dbReference type="ChEBI" id="CHEBI:43474"/>
        <dbReference type="ChEBI" id="CHEBI:57634"/>
        <dbReference type="EC" id="3.1.3.11"/>
    </reaction>
</comment>
<comment type="catalytic activity">
    <reaction evidence="3">
        <text>beta-D-fructose 1,6-bisphosphate = D-glyceraldehyde 3-phosphate + dihydroxyacetone phosphate</text>
        <dbReference type="Rhea" id="RHEA:14729"/>
        <dbReference type="ChEBI" id="CHEBI:32966"/>
        <dbReference type="ChEBI" id="CHEBI:57642"/>
        <dbReference type="ChEBI" id="CHEBI:59776"/>
        <dbReference type="EC" id="4.1.2.13"/>
    </reaction>
</comment>
<comment type="cofactor">
    <cofactor evidence="1">
        <name>Mg(2+)</name>
        <dbReference type="ChEBI" id="CHEBI:18420"/>
    </cofactor>
</comment>
<comment type="pathway">
    <text evidence="6">Carbohydrate biosynthesis; gluconeogenesis.</text>
</comment>
<comment type="subunit">
    <text evidence="1">Homooctamer; dimer of tetramers.</text>
</comment>
<comment type="domain">
    <text evidence="1">Consists of a single catalytic domain, but remodels its active-site architecture via a large structural change to exhibit dual activities.</text>
</comment>
<comment type="similarity">
    <text evidence="2 5">Belongs to the FBP aldolase/phosphatase family.</text>
</comment>
<organism>
    <name type="scientific">Moorella thermoacetica (strain ATCC 39073 / JCM 9320)</name>
    <dbReference type="NCBI Taxonomy" id="264732"/>
    <lineage>
        <taxon>Bacteria</taxon>
        <taxon>Bacillati</taxon>
        <taxon>Bacillota</taxon>
        <taxon>Clostridia</taxon>
        <taxon>Moorellales</taxon>
        <taxon>Moorellaceae</taxon>
        <taxon>Moorella</taxon>
    </lineage>
</organism>